<evidence type="ECO:0000255" key="1">
    <source>
        <dbReference type="PROSITE-ProRule" id="PRU10073"/>
    </source>
</evidence>
<evidence type="ECO:0000256" key="2">
    <source>
        <dbReference type="SAM" id="MobiDB-lite"/>
    </source>
</evidence>
<organism>
    <name type="scientific">Acinetobacter calcoaceticus</name>
    <dbReference type="NCBI Taxonomy" id="471"/>
    <lineage>
        <taxon>Bacteria</taxon>
        <taxon>Pseudomonadati</taxon>
        <taxon>Pseudomonadota</taxon>
        <taxon>Gammaproteobacteria</taxon>
        <taxon>Moraxellales</taxon>
        <taxon>Moraxellaceae</taxon>
        <taxon>Acinetobacter</taxon>
        <taxon>Acinetobacter calcoaceticus/baumannii complex</taxon>
    </lineage>
</organism>
<reference key="1">
    <citation type="journal article" date="1989" name="J. Bacteriol.">
        <title>Acinetobacter calcoaceticus genes involved in biosynthesis of the coenzyme pyrrolo-quinoline-quinone: nucleotide sequence and expression in Escherichia coli K-12.</title>
        <authorList>
            <person name="Goosen N."/>
            <person name="Horsman H.P.A."/>
            <person name="Huinen R.G.M."/>
            <person name="van de Putte P."/>
        </authorList>
    </citation>
    <scope>NUCLEOTIDE SEQUENCE [GENOMIC DNA]</scope>
    <source>
        <strain>LMD 79.41</strain>
    </source>
</reference>
<accession>P07783</accession>
<sequence length="315" mass="35598">MKPRHIPVFDGHNDALTRLWLSDHPDPVHAFIHERLVGHLDLKRCQEAGFIGGMFAIFLPPYSYVQQHHSNKLFDQNASDFTQQQIEQICLEQLDLAHQLAQYSKNIKICTSVQDIQDCRAEKKLAIVLHMEGAEALQQNPDLLDVFYERGLRSIGPLWNRPSRFGHGLNAKFPHSPDTGAGLTSDGKDFIKRCANKKMVIDVSHMNEKAFWNTVDILQQPIVATHSNSHALCPQARNLTDPQLKAIRESKGMVGVNFDVAFLRSDGQRNADTSIDVILEHLEYLMDRVAPLLHPRSKLRKGTHKRTPGRAGDAD</sequence>
<protein>
    <recommendedName>
        <fullName>Uncharacterized protein in PQQ-III 3'region</fullName>
    </recommendedName>
    <alternativeName>
        <fullName>ORF R</fullName>
    </alternativeName>
</protein>
<proteinExistence type="inferred from homology"/>
<name>YPQR_ACICA</name>
<dbReference type="EMBL" id="X06452">
    <property type="protein sequence ID" value="CAA29758.1"/>
    <property type="molecule type" value="Genomic_DNA"/>
</dbReference>
<dbReference type="PIR" id="T01637">
    <property type="entry name" value="T01637"/>
</dbReference>
<dbReference type="SMR" id="P07783"/>
<dbReference type="STRING" id="471.BUM88_09605"/>
<dbReference type="MEROPS" id="M19.003"/>
<dbReference type="GO" id="GO:0070573">
    <property type="term" value="F:metallodipeptidase activity"/>
    <property type="evidence" value="ECO:0007669"/>
    <property type="project" value="InterPro"/>
</dbReference>
<dbReference type="GO" id="GO:0006508">
    <property type="term" value="P:proteolysis"/>
    <property type="evidence" value="ECO:0007669"/>
    <property type="project" value="InterPro"/>
</dbReference>
<dbReference type="CDD" id="cd01301">
    <property type="entry name" value="rDP_like"/>
    <property type="match status" value="1"/>
</dbReference>
<dbReference type="Gene3D" id="3.20.20.140">
    <property type="entry name" value="Metal-dependent hydrolases"/>
    <property type="match status" value="1"/>
</dbReference>
<dbReference type="InterPro" id="IPR000180">
    <property type="entry name" value="Dipep_AS"/>
</dbReference>
<dbReference type="InterPro" id="IPR032466">
    <property type="entry name" value="Metal_Hydrolase"/>
</dbReference>
<dbReference type="InterPro" id="IPR008257">
    <property type="entry name" value="Pept_M19"/>
</dbReference>
<dbReference type="PANTHER" id="PTHR10443:SF12">
    <property type="entry name" value="DIPEPTIDASE"/>
    <property type="match status" value="1"/>
</dbReference>
<dbReference type="PANTHER" id="PTHR10443">
    <property type="entry name" value="MICROSOMAL DIPEPTIDASE"/>
    <property type="match status" value="1"/>
</dbReference>
<dbReference type="Pfam" id="PF01244">
    <property type="entry name" value="Peptidase_M19"/>
    <property type="match status" value="1"/>
</dbReference>
<dbReference type="SUPFAM" id="SSF51556">
    <property type="entry name" value="Metallo-dependent hydrolases"/>
    <property type="match status" value="1"/>
</dbReference>
<dbReference type="PROSITE" id="PS00869">
    <property type="entry name" value="RENAL_DIPEPTIDASE_1"/>
    <property type="match status" value="1"/>
</dbReference>
<dbReference type="PROSITE" id="PS51365">
    <property type="entry name" value="RENAL_DIPEPTIDASE_2"/>
    <property type="match status" value="1"/>
</dbReference>
<feature type="chain" id="PRO_0000206787" description="Uncharacterized protein in PQQ-III 3'region">
    <location>
        <begin position="1"/>
        <end position="315" status="greater than"/>
    </location>
</feature>
<feature type="region of interest" description="Disordered" evidence="2">
    <location>
        <begin position="296"/>
        <end position="315"/>
    </location>
</feature>
<feature type="compositionally biased region" description="Basic residues" evidence="2">
    <location>
        <begin position="296"/>
        <end position="308"/>
    </location>
</feature>
<feature type="non-terminal residue">
    <location>
        <position position="315"/>
    </location>
</feature>
<comment type="similarity">
    <text evidence="1">Belongs to the metallo-dependent hydrolases superfamily. Peptidase M19 family.</text>
</comment>